<dbReference type="EMBL" id="CP000727">
    <property type="protein sequence ID" value="ABS38110.1"/>
    <property type="molecule type" value="Genomic_DNA"/>
</dbReference>
<dbReference type="EMBL" id="AM412317">
    <property type="protein sequence ID" value="CAL84530.1"/>
    <property type="molecule type" value="Genomic_DNA"/>
</dbReference>
<dbReference type="RefSeq" id="WP_003358111.1">
    <property type="nucleotide sequence ID" value="NC_009698.1"/>
</dbReference>
<dbReference type="RefSeq" id="YP_001255460.1">
    <property type="nucleotide sequence ID" value="NC_009495.1"/>
</dbReference>
<dbReference type="RefSeq" id="YP_001388696.1">
    <property type="nucleotide sequence ID" value="NC_009698.1"/>
</dbReference>
<dbReference type="SMR" id="A5I648"/>
<dbReference type="GeneID" id="5187653"/>
<dbReference type="KEGG" id="cbh:CLC_2863"/>
<dbReference type="KEGG" id="cbo:CBO2967"/>
<dbReference type="PATRIC" id="fig|413999.7.peg.2946"/>
<dbReference type="HOGENOM" id="CLU_160655_0_0_9"/>
<dbReference type="PRO" id="PR:A5I648"/>
<dbReference type="Proteomes" id="UP000001986">
    <property type="component" value="Chromosome"/>
</dbReference>
<dbReference type="GO" id="GO:0005829">
    <property type="term" value="C:cytosol"/>
    <property type="evidence" value="ECO:0000318"/>
    <property type="project" value="GO_Central"/>
</dbReference>
<dbReference type="GO" id="GO:0015935">
    <property type="term" value="C:small ribosomal subunit"/>
    <property type="evidence" value="ECO:0000318"/>
    <property type="project" value="GO_Central"/>
</dbReference>
<dbReference type="GO" id="GO:0070181">
    <property type="term" value="F:small ribosomal subunit rRNA binding"/>
    <property type="evidence" value="ECO:0000318"/>
    <property type="project" value="GO_Central"/>
</dbReference>
<dbReference type="GO" id="GO:0003735">
    <property type="term" value="F:structural constituent of ribosome"/>
    <property type="evidence" value="ECO:0007669"/>
    <property type="project" value="InterPro"/>
</dbReference>
<dbReference type="GO" id="GO:0006412">
    <property type="term" value="P:translation"/>
    <property type="evidence" value="ECO:0007669"/>
    <property type="project" value="UniProtKB-UniRule"/>
</dbReference>
<dbReference type="FunFam" id="1.20.58.110:FF:000001">
    <property type="entry name" value="30S ribosomal protein S20"/>
    <property type="match status" value="1"/>
</dbReference>
<dbReference type="Gene3D" id="1.20.58.110">
    <property type="entry name" value="Ribosomal protein S20"/>
    <property type="match status" value="1"/>
</dbReference>
<dbReference type="HAMAP" id="MF_00500">
    <property type="entry name" value="Ribosomal_bS20"/>
    <property type="match status" value="1"/>
</dbReference>
<dbReference type="InterPro" id="IPR002583">
    <property type="entry name" value="Ribosomal_bS20"/>
</dbReference>
<dbReference type="InterPro" id="IPR036510">
    <property type="entry name" value="Ribosomal_bS20_sf"/>
</dbReference>
<dbReference type="NCBIfam" id="TIGR00029">
    <property type="entry name" value="S20"/>
    <property type="match status" value="1"/>
</dbReference>
<dbReference type="PANTHER" id="PTHR33398">
    <property type="entry name" value="30S RIBOSOMAL PROTEIN S20"/>
    <property type="match status" value="1"/>
</dbReference>
<dbReference type="PANTHER" id="PTHR33398:SF1">
    <property type="entry name" value="SMALL RIBOSOMAL SUBUNIT PROTEIN BS20C"/>
    <property type="match status" value="1"/>
</dbReference>
<dbReference type="Pfam" id="PF01649">
    <property type="entry name" value="Ribosomal_S20p"/>
    <property type="match status" value="1"/>
</dbReference>
<dbReference type="SUPFAM" id="SSF46992">
    <property type="entry name" value="Ribosomal protein S20"/>
    <property type="match status" value="1"/>
</dbReference>
<gene>
    <name evidence="1" type="primary">rpsT</name>
    <name type="ordered locus">CBO2967</name>
    <name type="ordered locus">CLC_2863</name>
</gene>
<feature type="chain" id="PRO_1000014573" description="Small ribosomal subunit protein bS20">
    <location>
        <begin position="1"/>
        <end position="88"/>
    </location>
</feature>
<keyword id="KW-1185">Reference proteome</keyword>
<keyword id="KW-0687">Ribonucleoprotein</keyword>
<keyword id="KW-0689">Ribosomal protein</keyword>
<keyword id="KW-0694">RNA-binding</keyword>
<keyword id="KW-0699">rRNA-binding</keyword>
<sequence length="88" mass="9655">MANIKSAKKRIKVIETKTLRNKMLKSSLKTTIKNFLTVVEGKNVEEAKAAYKTAARALDMSVSKGIVHKNKAARTKSRLAAKLNALNA</sequence>
<evidence type="ECO:0000255" key="1">
    <source>
        <dbReference type="HAMAP-Rule" id="MF_00500"/>
    </source>
</evidence>
<evidence type="ECO:0000305" key="2"/>
<organism>
    <name type="scientific">Clostridium botulinum (strain Hall / ATCC 3502 / NCTC 13319 / Type A)</name>
    <dbReference type="NCBI Taxonomy" id="441771"/>
    <lineage>
        <taxon>Bacteria</taxon>
        <taxon>Bacillati</taxon>
        <taxon>Bacillota</taxon>
        <taxon>Clostridia</taxon>
        <taxon>Eubacteriales</taxon>
        <taxon>Clostridiaceae</taxon>
        <taxon>Clostridium</taxon>
    </lineage>
</organism>
<name>RS20_CLOBH</name>
<proteinExistence type="inferred from homology"/>
<comment type="function">
    <text evidence="1">Binds directly to 16S ribosomal RNA.</text>
</comment>
<comment type="similarity">
    <text evidence="1">Belongs to the bacterial ribosomal protein bS20 family.</text>
</comment>
<accession>A5I648</accession>
<accession>A7G7D1</accession>
<protein>
    <recommendedName>
        <fullName evidence="1">Small ribosomal subunit protein bS20</fullName>
    </recommendedName>
    <alternativeName>
        <fullName evidence="2">30S ribosomal protein S20</fullName>
    </alternativeName>
</protein>
<reference key="1">
    <citation type="journal article" date="2007" name="Genome Res.">
        <title>Genome sequence of a proteolytic (Group I) Clostridium botulinum strain Hall A and comparative analysis of the clostridial genomes.</title>
        <authorList>
            <person name="Sebaihia M."/>
            <person name="Peck M.W."/>
            <person name="Minton N.P."/>
            <person name="Thomson N.R."/>
            <person name="Holden M.T.G."/>
            <person name="Mitchell W.J."/>
            <person name="Carter A.T."/>
            <person name="Bentley S.D."/>
            <person name="Mason D.R."/>
            <person name="Crossman L."/>
            <person name="Paul C.J."/>
            <person name="Ivens A."/>
            <person name="Wells-Bennik M.H.J."/>
            <person name="Davis I.J."/>
            <person name="Cerdeno-Tarraga A.M."/>
            <person name="Churcher C."/>
            <person name="Quail M.A."/>
            <person name="Chillingworth T."/>
            <person name="Feltwell T."/>
            <person name="Fraser A."/>
            <person name="Goodhead I."/>
            <person name="Hance Z."/>
            <person name="Jagels K."/>
            <person name="Larke N."/>
            <person name="Maddison M."/>
            <person name="Moule S."/>
            <person name="Mungall K."/>
            <person name="Norbertczak H."/>
            <person name="Rabbinowitsch E."/>
            <person name="Sanders M."/>
            <person name="Simmonds M."/>
            <person name="White B."/>
            <person name="Whithead S."/>
            <person name="Parkhill J."/>
        </authorList>
    </citation>
    <scope>NUCLEOTIDE SEQUENCE [LARGE SCALE GENOMIC DNA]</scope>
    <source>
        <strain>Hall / ATCC 3502 / NCTC 13319 / Type A</strain>
    </source>
</reference>
<reference key="2">
    <citation type="journal article" date="2007" name="PLoS ONE">
        <title>Analysis of the neurotoxin complex genes in Clostridium botulinum A1-A4 and B1 strains: BoNT/A3, /Ba4 and /B1 clusters are located within plasmids.</title>
        <authorList>
            <person name="Smith T.J."/>
            <person name="Hill K.K."/>
            <person name="Foley B.T."/>
            <person name="Detter J.C."/>
            <person name="Munk A.C."/>
            <person name="Bruce D.C."/>
            <person name="Doggett N.A."/>
            <person name="Smith L.A."/>
            <person name="Marks J.D."/>
            <person name="Xie G."/>
            <person name="Brettin T.S."/>
        </authorList>
    </citation>
    <scope>NUCLEOTIDE SEQUENCE [LARGE SCALE GENOMIC DNA]</scope>
    <source>
        <strain>Hall / ATCC 3502 / NCTC 13319 / Type A</strain>
    </source>
</reference>